<name>RL34_SOLM1</name>
<comment type="similarity">
    <text evidence="1">Belongs to the bacterial ribosomal protein bL34 family.</text>
</comment>
<feature type="chain" id="PRO_1000205823" description="Large ribosomal subunit protein bL34">
    <location>
        <begin position="1"/>
        <end position="45"/>
    </location>
</feature>
<feature type="region of interest" description="Disordered" evidence="2">
    <location>
        <begin position="1"/>
        <end position="45"/>
    </location>
</feature>
<feature type="compositionally biased region" description="Basic residues" evidence="2">
    <location>
        <begin position="32"/>
        <end position="45"/>
    </location>
</feature>
<proteinExistence type="inferred from homology"/>
<keyword id="KW-0687">Ribonucleoprotein</keyword>
<keyword id="KW-0689">Ribosomal protein</keyword>
<organism>
    <name type="scientific">Solidesulfovibrio magneticus (strain ATCC 700980 / DSM 13731 / RS-1)</name>
    <name type="common">Desulfovibrio magneticus</name>
    <dbReference type="NCBI Taxonomy" id="573370"/>
    <lineage>
        <taxon>Bacteria</taxon>
        <taxon>Pseudomonadati</taxon>
        <taxon>Thermodesulfobacteriota</taxon>
        <taxon>Desulfovibrionia</taxon>
        <taxon>Desulfovibrionales</taxon>
        <taxon>Desulfovibrionaceae</taxon>
        <taxon>Solidesulfovibrio</taxon>
    </lineage>
</organism>
<dbReference type="EMBL" id="AP010904">
    <property type="protein sequence ID" value="BAH74969.1"/>
    <property type="molecule type" value="Genomic_DNA"/>
</dbReference>
<dbReference type="RefSeq" id="WP_006918232.1">
    <property type="nucleotide sequence ID" value="NC_012796.1"/>
</dbReference>
<dbReference type="SMR" id="C4XNJ4"/>
<dbReference type="STRING" id="573370.DMR_14780"/>
<dbReference type="KEGG" id="dma:DMR_14780"/>
<dbReference type="eggNOG" id="COG0230">
    <property type="taxonomic scope" value="Bacteria"/>
</dbReference>
<dbReference type="HOGENOM" id="CLU_129938_2_0_7"/>
<dbReference type="OrthoDB" id="9804164at2"/>
<dbReference type="Proteomes" id="UP000009071">
    <property type="component" value="Chromosome"/>
</dbReference>
<dbReference type="GO" id="GO:1990904">
    <property type="term" value="C:ribonucleoprotein complex"/>
    <property type="evidence" value="ECO:0007669"/>
    <property type="project" value="UniProtKB-KW"/>
</dbReference>
<dbReference type="GO" id="GO:0005840">
    <property type="term" value="C:ribosome"/>
    <property type="evidence" value="ECO:0007669"/>
    <property type="project" value="UniProtKB-KW"/>
</dbReference>
<dbReference type="GO" id="GO:0003735">
    <property type="term" value="F:structural constituent of ribosome"/>
    <property type="evidence" value="ECO:0007669"/>
    <property type="project" value="InterPro"/>
</dbReference>
<dbReference type="GO" id="GO:0006412">
    <property type="term" value="P:translation"/>
    <property type="evidence" value="ECO:0007669"/>
    <property type="project" value="UniProtKB-UniRule"/>
</dbReference>
<dbReference type="FunFam" id="1.10.287.3980:FF:000001">
    <property type="entry name" value="Mitochondrial ribosomal protein L34"/>
    <property type="match status" value="1"/>
</dbReference>
<dbReference type="Gene3D" id="1.10.287.3980">
    <property type="match status" value="1"/>
</dbReference>
<dbReference type="HAMAP" id="MF_00391">
    <property type="entry name" value="Ribosomal_bL34"/>
    <property type="match status" value="1"/>
</dbReference>
<dbReference type="InterPro" id="IPR000271">
    <property type="entry name" value="Ribosomal_bL34"/>
</dbReference>
<dbReference type="NCBIfam" id="TIGR01030">
    <property type="entry name" value="rpmH_bact"/>
    <property type="match status" value="1"/>
</dbReference>
<dbReference type="PANTHER" id="PTHR14503:SF4">
    <property type="entry name" value="LARGE RIBOSOMAL SUBUNIT PROTEIN BL34M"/>
    <property type="match status" value="1"/>
</dbReference>
<dbReference type="PANTHER" id="PTHR14503">
    <property type="entry name" value="MITOCHONDRIAL RIBOSOMAL PROTEIN 34 FAMILY MEMBER"/>
    <property type="match status" value="1"/>
</dbReference>
<dbReference type="Pfam" id="PF00468">
    <property type="entry name" value="Ribosomal_L34"/>
    <property type="match status" value="1"/>
</dbReference>
<sequence length="45" mass="5364">MSKKTYQPSKIRRNRSHGFLVRSRTKNGQAILRRRRAKGRKRLAV</sequence>
<evidence type="ECO:0000255" key="1">
    <source>
        <dbReference type="HAMAP-Rule" id="MF_00391"/>
    </source>
</evidence>
<evidence type="ECO:0000256" key="2">
    <source>
        <dbReference type="SAM" id="MobiDB-lite"/>
    </source>
</evidence>
<evidence type="ECO:0000305" key="3"/>
<accession>C4XNJ4</accession>
<reference key="1">
    <citation type="journal article" date="2009" name="Genome Res.">
        <title>Whole genome sequence of Desulfovibrio magneticus strain RS-1 revealed common gene clusters in magnetotactic bacteria.</title>
        <authorList>
            <person name="Nakazawa H."/>
            <person name="Arakaki A."/>
            <person name="Narita-Yamada S."/>
            <person name="Yashiro I."/>
            <person name="Jinno K."/>
            <person name="Aoki N."/>
            <person name="Tsuruyama A."/>
            <person name="Okamura Y."/>
            <person name="Tanikawa S."/>
            <person name="Fujita N."/>
            <person name="Takeyama H."/>
            <person name="Matsunaga T."/>
        </authorList>
    </citation>
    <scope>NUCLEOTIDE SEQUENCE [LARGE SCALE GENOMIC DNA]</scope>
    <source>
        <strain>ATCC 700980 / DSM 13731 / RS-1</strain>
    </source>
</reference>
<protein>
    <recommendedName>
        <fullName evidence="1">Large ribosomal subunit protein bL34</fullName>
    </recommendedName>
    <alternativeName>
        <fullName evidence="3">50S ribosomal protein L34</fullName>
    </alternativeName>
</protein>
<gene>
    <name evidence="1" type="primary">rpmH</name>
    <name type="ordered locus">DMR_14780</name>
</gene>